<sequence>MFEINPVKNRIQDLSDRTAVLRGYLDYDAKKERLEEVNAELEQPDVWNEPERAQALGKERSSLEEIVTTIDQLDQGMDDVTGLLELAIEADDEETFNEAVAELDILDGKLGQLEFRRMFSGEYDSANCYLDLQAGSGGTEAQDWASMLLRMYLRWAEAKGFKTEIIEESDGDVAGLKSATIKIIGDYAFGWLRTETGVHRLVRKSPFDSGGRRHTSFSSAFVYPEVDDDIDIEINPADLRIDVYRASGAGGQHVNKTESAVRITHIPTNIVTQCQNDRSQHKNKDQAMKQLKAKLYEFEMQKKNADKQMLEDNKSDIGWGSQIRSYVLDDSRIKDLRTGVETRNTQAVLDGDLDKFIEASLKAGL</sequence>
<organism>
    <name type="scientific">Yersinia enterocolitica serotype O:8 / biotype 1B (strain NCTC 13174 / 8081)</name>
    <dbReference type="NCBI Taxonomy" id="393305"/>
    <lineage>
        <taxon>Bacteria</taxon>
        <taxon>Pseudomonadati</taxon>
        <taxon>Pseudomonadota</taxon>
        <taxon>Gammaproteobacteria</taxon>
        <taxon>Enterobacterales</taxon>
        <taxon>Yersiniaceae</taxon>
        <taxon>Yersinia</taxon>
    </lineage>
</organism>
<comment type="function">
    <text evidence="2">Peptide chain release factor 2 directs the termination of translation in response to the peptide chain termination codons UGA and UAA.</text>
</comment>
<comment type="subcellular location">
    <subcellularLocation>
        <location evidence="2">Cytoplasm</location>
    </subcellularLocation>
</comment>
<comment type="PTM">
    <text evidence="2">Methylated by PrmC. Methylation increases the termination efficiency of RF2.</text>
</comment>
<comment type="miscellaneous">
    <text evidence="1">The gene for this protein contains a UGA in-frame termination codon after Leu-25; a naturally occurring frameshift enables complete translation of RF-2. This provides a mechanism for the protein to regulate its own production (By similarity).</text>
</comment>
<comment type="similarity">
    <text evidence="2">Belongs to the prokaryotic/mitochondrial release factor family.</text>
</comment>
<name>RF2_YERE8</name>
<dbReference type="EMBL" id="AM286415">
    <property type="protein sequence ID" value="CAL13403.1"/>
    <property type="molecule type" value="Genomic_DNA"/>
</dbReference>
<dbReference type="RefSeq" id="WP_011817019.1">
    <property type="nucleotide sequence ID" value="NC_008800.1"/>
</dbReference>
<dbReference type="RefSeq" id="YP_001007546.1">
    <property type="nucleotide sequence ID" value="NC_008800.1"/>
</dbReference>
<dbReference type="SMR" id="A1JPL5"/>
<dbReference type="GeneID" id="93972849"/>
<dbReference type="KEGG" id="yen:YE3376"/>
<dbReference type="PATRIC" id="fig|393305.7.peg.3583"/>
<dbReference type="eggNOG" id="COG1186">
    <property type="taxonomic scope" value="Bacteria"/>
</dbReference>
<dbReference type="HOGENOM" id="CLU_220733_1_0_6"/>
<dbReference type="OrthoDB" id="9806673at2"/>
<dbReference type="Proteomes" id="UP000000642">
    <property type="component" value="Chromosome"/>
</dbReference>
<dbReference type="GO" id="GO:0005737">
    <property type="term" value="C:cytoplasm"/>
    <property type="evidence" value="ECO:0007669"/>
    <property type="project" value="UniProtKB-SubCell"/>
</dbReference>
<dbReference type="GO" id="GO:0016149">
    <property type="term" value="F:translation release factor activity, codon specific"/>
    <property type="evidence" value="ECO:0007669"/>
    <property type="project" value="UniProtKB-UniRule"/>
</dbReference>
<dbReference type="GO" id="GO:0075523">
    <property type="term" value="P:viral translational frameshifting"/>
    <property type="evidence" value="ECO:0007669"/>
    <property type="project" value="UniProtKB-KW"/>
</dbReference>
<dbReference type="FunFam" id="3.30.160.20:FF:000010">
    <property type="entry name" value="Peptide chain release factor 2"/>
    <property type="match status" value="1"/>
</dbReference>
<dbReference type="Gene3D" id="3.30.160.20">
    <property type="match status" value="1"/>
</dbReference>
<dbReference type="Gene3D" id="3.30.70.1660">
    <property type="match status" value="1"/>
</dbReference>
<dbReference type="Gene3D" id="1.20.58.410">
    <property type="entry name" value="Release factor"/>
    <property type="match status" value="1"/>
</dbReference>
<dbReference type="HAMAP" id="MF_00094">
    <property type="entry name" value="Rel_fac_2"/>
    <property type="match status" value="1"/>
</dbReference>
<dbReference type="InterPro" id="IPR005139">
    <property type="entry name" value="PCRF"/>
</dbReference>
<dbReference type="InterPro" id="IPR000352">
    <property type="entry name" value="Pep_chain_release_fac_I"/>
</dbReference>
<dbReference type="InterPro" id="IPR045853">
    <property type="entry name" value="Pep_chain_release_fac_I_sf"/>
</dbReference>
<dbReference type="InterPro" id="IPR004374">
    <property type="entry name" value="PrfB"/>
</dbReference>
<dbReference type="NCBIfam" id="TIGR00020">
    <property type="entry name" value="prfB"/>
    <property type="match status" value="1"/>
</dbReference>
<dbReference type="PANTHER" id="PTHR43116:SF3">
    <property type="entry name" value="CLASS I PEPTIDE CHAIN RELEASE FACTOR"/>
    <property type="match status" value="1"/>
</dbReference>
<dbReference type="PANTHER" id="PTHR43116">
    <property type="entry name" value="PEPTIDE CHAIN RELEASE FACTOR 2"/>
    <property type="match status" value="1"/>
</dbReference>
<dbReference type="Pfam" id="PF03462">
    <property type="entry name" value="PCRF"/>
    <property type="match status" value="1"/>
</dbReference>
<dbReference type="Pfam" id="PF00472">
    <property type="entry name" value="RF-1"/>
    <property type="match status" value="1"/>
</dbReference>
<dbReference type="SMART" id="SM00937">
    <property type="entry name" value="PCRF"/>
    <property type="match status" value="1"/>
</dbReference>
<dbReference type="SUPFAM" id="SSF75620">
    <property type="entry name" value="Release factor"/>
    <property type="match status" value="1"/>
</dbReference>
<dbReference type="PROSITE" id="PS00745">
    <property type="entry name" value="RF_PROK_I"/>
    <property type="match status" value="1"/>
</dbReference>
<evidence type="ECO:0000250" key="1"/>
<evidence type="ECO:0000255" key="2">
    <source>
        <dbReference type="HAMAP-Rule" id="MF_00094"/>
    </source>
</evidence>
<keyword id="KW-0963">Cytoplasm</keyword>
<keyword id="KW-0488">Methylation</keyword>
<keyword id="KW-0648">Protein biosynthesis</keyword>
<keyword id="KW-0688">Ribosomal frameshifting</keyword>
<reference key="1">
    <citation type="journal article" date="2006" name="PLoS Genet.">
        <title>The complete genome sequence and comparative genome analysis of the high pathogenicity Yersinia enterocolitica strain 8081.</title>
        <authorList>
            <person name="Thomson N.R."/>
            <person name="Howard S."/>
            <person name="Wren B.W."/>
            <person name="Holden M.T.G."/>
            <person name="Crossman L."/>
            <person name="Challis G.L."/>
            <person name="Churcher C."/>
            <person name="Mungall K."/>
            <person name="Brooks K."/>
            <person name="Chillingworth T."/>
            <person name="Feltwell T."/>
            <person name="Abdellah Z."/>
            <person name="Hauser H."/>
            <person name="Jagels K."/>
            <person name="Maddison M."/>
            <person name="Moule S."/>
            <person name="Sanders M."/>
            <person name="Whitehead S."/>
            <person name="Quail M.A."/>
            <person name="Dougan G."/>
            <person name="Parkhill J."/>
            <person name="Prentice M.B."/>
        </authorList>
    </citation>
    <scope>NUCLEOTIDE SEQUENCE [LARGE SCALE GENOMIC DNA]</scope>
    <source>
        <strain>NCTC 13174 / 8081</strain>
    </source>
</reference>
<proteinExistence type="inferred from homology"/>
<feature type="chain" id="PRO_1000005023" description="Peptide chain release factor 2">
    <location>
        <begin position="1"/>
        <end position="365"/>
    </location>
</feature>
<feature type="modified residue" description="N5-methylglutamine" evidence="2">
    <location>
        <position position="252"/>
    </location>
</feature>
<protein>
    <recommendedName>
        <fullName evidence="2">Peptide chain release factor 2</fullName>
        <shortName evidence="2">RF-2</shortName>
    </recommendedName>
</protein>
<gene>
    <name evidence="2" type="primary">prfB</name>
    <name type="ordered locus">YE3376</name>
</gene>
<accession>A1JPL5</accession>